<dbReference type="EC" id="2.7.7.8" evidence="1"/>
<dbReference type="EMBL" id="AL939124">
    <property type="protein sequence ID" value="CAD55364.1"/>
    <property type="molecule type" value="Genomic_DNA"/>
</dbReference>
<dbReference type="PIR" id="T10932">
    <property type="entry name" value="T10932"/>
</dbReference>
<dbReference type="RefSeq" id="NP_733673.1">
    <property type="nucleotide sequence ID" value="NC_003888.3"/>
</dbReference>
<dbReference type="RefSeq" id="WP_003973290.1">
    <property type="nucleotide sequence ID" value="NZ_VNID01000024.1"/>
</dbReference>
<dbReference type="SMR" id="Q8CJQ6"/>
<dbReference type="FunCoup" id="Q8CJQ6">
    <property type="interactions" value="352"/>
</dbReference>
<dbReference type="STRING" id="100226.gene:17763393"/>
<dbReference type="PaxDb" id="100226-SCO5737"/>
<dbReference type="KEGG" id="sco:SCO5737"/>
<dbReference type="PATRIC" id="fig|100226.15.peg.5825"/>
<dbReference type="eggNOG" id="COG1185">
    <property type="taxonomic scope" value="Bacteria"/>
</dbReference>
<dbReference type="HOGENOM" id="CLU_004217_2_2_11"/>
<dbReference type="InParanoid" id="Q8CJQ6"/>
<dbReference type="OrthoDB" id="9804305at2"/>
<dbReference type="PhylomeDB" id="Q8CJQ6"/>
<dbReference type="Proteomes" id="UP000001973">
    <property type="component" value="Chromosome"/>
</dbReference>
<dbReference type="GO" id="GO:0005829">
    <property type="term" value="C:cytosol"/>
    <property type="evidence" value="ECO:0000318"/>
    <property type="project" value="GO_Central"/>
</dbReference>
<dbReference type="GO" id="GO:0000175">
    <property type="term" value="F:3'-5'-RNA exonuclease activity"/>
    <property type="evidence" value="ECO:0000318"/>
    <property type="project" value="GO_Central"/>
</dbReference>
<dbReference type="GO" id="GO:0000287">
    <property type="term" value="F:magnesium ion binding"/>
    <property type="evidence" value="ECO:0007669"/>
    <property type="project" value="UniProtKB-UniRule"/>
</dbReference>
<dbReference type="GO" id="GO:0004654">
    <property type="term" value="F:polyribonucleotide nucleotidyltransferase activity"/>
    <property type="evidence" value="ECO:0000318"/>
    <property type="project" value="GO_Central"/>
</dbReference>
<dbReference type="GO" id="GO:0003723">
    <property type="term" value="F:RNA binding"/>
    <property type="evidence" value="ECO:0007669"/>
    <property type="project" value="UniProtKB-UniRule"/>
</dbReference>
<dbReference type="GO" id="GO:0006402">
    <property type="term" value="P:mRNA catabolic process"/>
    <property type="evidence" value="ECO:0007669"/>
    <property type="project" value="UniProtKB-UniRule"/>
</dbReference>
<dbReference type="GO" id="GO:0006401">
    <property type="term" value="P:RNA catabolic process"/>
    <property type="evidence" value="ECO:0000318"/>
    <property type="project" value="GO_Central"/>
</dbReference>
<dbReference type="GO" id="GO:0006396">
    <property type="term" value="P:RNA processing"/>
    <property type="evidence" value="ECO:0007669"/>
    <property type="project" value="InterPro"/>
</dbReference>
<dbReference type="CDD" id="cd02393">
    <property type="entry name" value="KH-I_PNPase"/>
    <property type="match status" value="1"/>
</dbReference>
<dbReference type="CDD" id="cd11364">
    <property type="entry name" value="RNase_PH_PNPase_2"/>
    <property type="match status" value="1"/>
</dbReference>
<dbReference type="CDD" id="cd04472">
    <property type="entry name" value="S1_PNPase"/>
    <property type="match status" value="1"/>
</dbReference>
<dbReference type="FunFam" id="2.40.50.140:FF:000069">
    <property type="entry name" value="Polyribonucleotide nucleotidyltransferase"/>
    <property type="match status" value="1"/>
</dbReference>
<dbReference type="FunFam" id="3.30.1370.10:FF:000001">
    <property type="entry name" value="Polyribonucleotide nucleotidyltransferase"/>
    <property type="match status" value="1"/>
</dbReference>
<dbReference type="FunFam" id="3.30.230.70:FF:000001">
    <property type="entry name" value="Polyribonucleotide nucleotidyltransferase"/>
    <property type="match status" value="1"/>
</dbReference>
<dbReference type="FunFam" id="3.30.230.70:FF:000002">
    <property type="entry name" value="Polyribonucleotide nucleotidyltransferase"/>
    <property type="match status" value="1"/>
</dbReference>
<dbReference type="Gene3D" id="3.30.230.70">
    <property type="entry name" value="GHMP Kinase, N-terminal domain"/>
    <property type="match status" value="2"/>
</dbReference>
<dbReference type="Gene3D" id="3.30.1370.10">
    <property type="entry name" value="K Homology domain, type 1"/>
    <property type="match status" value="1"/>
</dbReference>
<dbReference type="Gene3D" id="2.40.50.140">
    <property type="entry name" value="Nucleic acid-binding proteins"/>
    <property type="match status" value="1"/>
</dbReference>
<dbReference type="HAMAP" id="MF_01595">
    <property type="entry name" value="PNPase"/>
    <property type="match status" value="1"/>
</dbReference>
<dbReference type="InterPro" id="IPR001247">
    <property type="entry name" value="ExoRNase_PH_dom1"/>
</dbReference>
<dbReference type="InterPro" id="IPR036345">
    <property type="entry name" value="ExoRNase_PH_dom2_sf"/>
</dbReference>
<dbReference type="InterPro" id="IPR014069">
    <property type="entry name" value="GPSI/PNP"/>
</dbReference>
<dbReference type="InterPro" id="IPR004087">
    <property type="entry name" value="KH_dom"/>
</dbReference>
<dbReference type="InterPro" id="IPR004088">
    <property type="entry name" value="KH_dom_type_1"/>
</dbReference>
<dbReference type="InterPro" id="IPR036612">
    <property type="entry name" value="KH_dom_type_1_sf"/>
</dbReference>
<dbReference type="InterPro" id="IPR012340">
    <property type="entry name" value="NA-bd_OB-fold"/>
</dbReference>
<dbReference type="InterPro" id="IPR012162">
    <property type="entry name" value="PNPase"/>
</dbReference>
<dbReference type="InterPro" id="IPR027408">
    <property type="entry name" value="PNPase/RNase_PH_dom_sf"/>
</dbReference>
<dbReference type="InterPro" id="IPR015848">
    <property type="entry name" value="PNPase_PH_RNA-bd_bac/org-type"/>
</dbReference>
<dbReference type="InterPro" id="IPR036456">
    <property type="entry name" value="PNPase_PH_RNA-bd_sf"/>
</dbReference>
<dbReference type="InterPro" id="IPR020568">
    <property type="entry name" value="Ribosomal_Su5_D2-typ_SF"/>
</dbReference>
<dbReference type="InterPro" id="IPR003029">
    <property type="entry name" value="S1_domain"/>
</dbReference>
<dbReference type="NCBIfam" id="TIGR03591">
    <property type="entry name" value="polynuc_phos"/>
    <property type="match status" value="1"/>
</dbReference>
<dbReference type="NCBIfam" id="TIGR02696">
    <property type="entry name" value="pppGpp_PNP"/>
    <property type="match status" value="1"/>
</dbReference>
<dbReference type="NCBIfam" id="NF008805">
    <property type="entry name" value="PRK11824.1"/>
    <property type="match status" value="1"/>
</dbReference>
<dbReference type="PANTHER" id="PTHR11252">
    <property type="entry name" value="POLYRIBONUCLEOTIDE NUCLEOTIDYLTRANSFERASE"/>
    <property type="match status" value="1"/>
</dbReference>
<dbReference type="PANTHER" id="PTHR11252:SF0">
    <property type="entry name" value="POLYRIBONUCLEOTIDE NUCLEOTIDYLTRANSFERASE 1, MITOCHONDRIAL"/>
    <property type="match status" value="1"/>
</dbReference>
<dbReference type="Pfam" id="PF00013">
    <property type="entry name" value="KH_1"/>
    <property type="match status" value="1"/>
</dbReference>
<dbReference type="Pfam" id="PF03726">
    <property type="entry name" value="PNPase"/>
    <property type="match status" value="1"/>
</dbReference>
<dbReference type="Pfam" id="PF01138">
    <property type="entry name" value="RNase_PH"/>
    <property type="match status" value="2"/>
</dbReference>
<dbReference type="Pfam" id="PF00575">
    <property type="entry name" value="S1"/>
    <property type="match status" value="1"/>
</dbReference>
<dbReference type="PIRSF" id="PIRSF005499">
    <property type="entry name" value="PNPase"/>
    <property type="match status" value="1"/>
</dbReference>
<dbReference type="SMART" id="SM00322">
    <property type="entry name" value="KH"/>
    <property type="match status" value="1"/>
</dbReference>
<dbReference type="SMART" id="SM00316">
    <property type="entry name" value="S1"/>
    <property type="match status" value="1"/>
</dbReference>
<dbReference type="SUPFAM" id="SSF54791">
    <property type="entry name" value="Eukaryotic type KH-domain (KH-domain type I)"/>
    <property type="match status" value="1"/>
</dbReference>
<dbReference type="SUPFAM" id="SSF50249">
    <property type="entry name" value="Nucleic acid-binding proteins"/>
    <property type="match status" value="1"/>
</dbReference>
<dbReference type="SUPFAM" id="SSF46915">
    <property type="entry name" value="Polynucleotide phosphorylase/guanosine pentaphosphate synthase (PNPase/GPSI), domain 3"/>
    <property type="match status" value="1"/>
</dbReference>
<dbReference type="SUPFAM" id="SSF55666">
    <property type="entry name" value="Ribonuclease PH domain 2-like"/>
    <property type="match status" value="2"/>
</dbReference>
<dbReference type="SUPFAM" id="SSF54211">
    <property type="entry name" value="Ribosomal protein S5 domain 2-like"/>
    <property type="match status" value="2"/>
</dbReference>
<dbReference type="PROSITE" id="PS50084">
    <property type="entry name" value="KH_TYPE_1"/>
    <property type="match status" value="1"/>
</dbReference>
<dbReference type="PROSITE" id="PS50126">
    <property type="entry name" value="S1"/>
    <property type="match status" value="1"/>
</dbReference>
<gene>
    <name evidence="1" type="primary">pnp</name>
    <name type="ordered locus">SCO5737</name>
    <name type="ORF">SC3C3.23</name>
    <name type="ORF">SC9A10.01</name>
</gene>
<sequence>MENETHYAEAVIDNGAFGTRTIRFETGRLARQAAGSAVAYLDDDTMVLSATSASKNPKDQLDFFPLTVDVEERMYAAGKIPGSFFRREGRPSEDAILTCRLIDRPLRPSFKKGLRNEIQVVATIMALNPDHLYDVVAINAASASTQLAGLPFSGPIGGVRVALIRGQWVAFPTHTELEDAVFDMVVAGRVLEDGDVAIMMVEAEATDKTIKLVEGGAEAPTEEVVAAGLDAAKPFIKVLCRAQADLAAKAAKPTGEFPIFLDFQDDVLEALTGAVKPELTQALTIAGKQEREAELDRVKGLAAEKLLPEFEGREKEISAAYRALTKSLVRERVIKEKKRIDGRGVTDIRTLAAEVEAIPRVHGSALFERGETQILGVTTLNMLRMEQQLDTLSPVTRKRYMHNYNFPPYSVGETGRVGSPKRREIGHGALAERAIVPVLPTREEFPYAIRQVSEALGSNGSTSMGSVCASTMSLLNAGVPLKAPVAGIAMGLISQEINGETHYVALTDILGAEDAFGDMDFKVAGTKEFVTALQLDTKLDGIPASVLAAALKQARDARLHILDVMMEAIDTPDEMSPNAPRIITVKIPVDKIGEVIGPKGKMINQIQEDTGADITIEDDGTIYIGAAQGSQAEAARATINGIANPTMPEVGERYLGTVVKTTTFGAFVSLLPGKDGLLHISQIRKLAGGKRVENVEDVLGVGAKVQVEIAEIDSRGKLSLIPVIEGEAGDDDKKDDADK</sequence>
<reference key="1">
    <citation type="journal article" date="2002" name="Nature">
        <title>Complete genome sequence of the model actinomycete Streptomyces coelicolor A3(2).</title>
        <authorList>
            <person name="Bentley S.D."/>
            <person name="Chater K.F."/>
            <person name="Cerdeno-Tarraga A.-M."/>
            <person name="Challis G.L."/>
            <person name="Thomson N.R."/>
            <person name="James K.D."/>
            <person name="Harris D.E."/>
            <person name="Quail M.A."/>
            <person name="Kieser H."/>
            <person name="Harper D."/>
            <person name="Bateman A."/>
            <person name="Brown S."/>
            <person name="Chandra G."/>
            <person name="Chen C.W."/>
            <person name="Collins M."/>
            <person name="Cronin A."/>
            <person name="Fraser A."/>
            <person name="Goble A."/>
            <person name="Hidalgo J."/>
            <person name="Hornsby T."/>
            <person name="Howarth S."/>
            <person name="Huang C.-H."/>
            <person name="Kieser T."/>
            <person name="Larke L."/>
            <person name="Murphy L.D."/>
            <person name="Oliver K."/>
            <person name="O'Neil S."/>
            <person name="Rabbinowitsch E."/>
            <person name="Rajandream M.A."/>
            <person name="Rutherford K.M."/>
            <person name="Rutter S."/>
            <person name="Seeger K."/>
            <person name="Saunders D."/>
            <person name="Sharp S."/>
            <person name="Squares R."/>
            <person name="Squares S."/>
            <person name="Taylor K."/>
            <person name="Warren T."/>
            <person name="Wietzorrek A."/>
            <person name="Woodward J.R."/>
            <person name="Barrell B.G."/>
            <person name="Parkhill J."/>
            <person name="Hopwood D.A."/>
        </authorList>
    </citation>
    <scope>NUCLEOTIDE SEQUENCE [LARGE SCALE GENOMIC DNA]</scope>
    <source>
        <strain>ATCC BAA-471 / A3(2) / M145</strain>
    </source>
</reference>
<accession>Q8CJQ6</accession>
<organism>
    <name type="scientific">Streptomyces coelicolor (strain ATCC BAA-471 / A3(2) / M145)</name>
    <dbReference type="NCBI Taxonomy" id="100226"/>
    <lineage>
        <taxon>Bacteria</taxon>
        <taxon>Bacillati</taxon>
        <taxon>Actinomycetota</taxon>
        <taxon>Actinomycetes</taxon>
        <taxon>Kitasatosporales</taxon>
        <taxon>Streptomycetaceae</taxon>
        <taxon>Streptomyces</taxon>
        <taxon>Streptomyces albidoflavus group</taxon>
    </lineage>
</organism>
<evidence type="ECO:0000255" key="1">
    <source>
        <dbReference type="HAMAP-Rule" id="MF_01595"/>
    </source>
</evidence>
<protein>
    <recommendedName>
        <fullName evidence="1">Polyribonucleotide nucleotidyltransferase</fullName>
        <ecNumber evidence="1">2.7.7.8</ecNumber>
    </recommendedName>
    <alternativeName>
        <fullName evidence="1">Polynucleotide phosphorylase</fullName>
        <shortName evidence="1">PNPase</shortName>
    </alternativeName>
</protein>
<proteinExistence type="inferred from homology"/>
<comment type="function">
    <text evidence="1">Involved in mRNA degradation. Catalyzes the phosphorolysis of single-stranded polyribonucleotides processively in the 3'- to 5'-direction.</text>
</comment>
<comment type="catalytic activity">
    <reaction evidence="1">
        <text>RNA(n+1) + phosphate = RNA(n) + a ribonucleoside 5'-diphosphate</text>
        <dbReference type="Rhea" id="RHEA:22096"/>
        <dbReference type="Rhea" id="RHEA-COMP:14527"/>
        <dbReference type="Rhea" id="RHEA-COMP:17342"/>
        <dbReference type="ChEBI" id="CHEBI:43474"/>
        <dbReference type="ChEBI" id="CHEBI:57930"/>
        <dbReference type="ChEBI" id="CHEBI:140395"/>
        <dbReference type="EC" id="2.7.7.8"/>
    </reaction>
</comment>
<comment type="cofactor">
    <cofactor evidence="1">
        <name>Mg(2+)</name>
        <dbReference type="ChEBI" id="CHEBI:18420"/>
    </cofactor>
</comment>
<comment type="subcellular location">
    <subcellularLocation>
        <location evidence="1">Cytoplasm</location>
    </subcellularLocation>
</comment>
<comment type="similarity">
    <text evidence="1">Belongs to the polyribonucleotide nucleotidyltransferase family.</text>
</comment>
<name>PNP_STRCO</name>
<keyword id="KW-0963">Cytoplasm</keyword>
<keyword id="KW-0460">Magnesium</keyword>
<keyword id="KW-0479">Metal-binding</keyword>
<keyword id="KW-0548">Nucleotidyltransferase</keyword>
<keyword id="KW-1185">Reference proteome</keyword>
<keyword id="KW-0694">RNA-binding</keyword>
<keyword id="KW-0808">Transferase</keyword>
<feature type="chain" id="PRO_0000329889" description="Polyribonucleotide nucleotidyltransferase">
    <location>
        <begin position="1"/>
        <end position="739"/>
    </location>
</feature>
<feature type="domain" description="KH" evidence="1">
    <location>
        <begin position="580"/>
        <end position="639"/>
    </location>
</feature>
<feature type="domain" description="S1 motif" evidence="1">
    <location>
        <begin position="651"/>
        <end position="723"/>
    </location>
</feature>
<feature type="binding site" evidence="1">
    <location>
        <position position="514"/>
    </location>
    <ligand>
        <name>Mg(2+)</name>
        <dbReference type="ChEBI" id="CHEBI:18420"/>
    </ligand>
</feature>
<feature type="binding site" evidence="1">
    <location>
        <position position="520"/>
    </location>
    <ligand>
        <name>Mg(2+)</name>
        <dbReference type="ChEBI" id="CHEBI:18420"/>
    </ligand>
</feature>